<comment type="function">
    <text evidence="1">Catalyzes the conversion of dihydroorotate to orotate with NAD(+) as electron acceptor.</text>
</comment>
<comment type="catalytic activity">
    <reaction>
        <text>(S)-dihydroorotate + NAD(+) = orotate + NADH + H(+)</text>
        <dbReference type="Rhea" id="RHEA:13513"/>
        <dbReference type="ChEBI" id="CHEBI:15378"/>
        <dbReference type="ChEBI" id="CHEBI:30839"/>
        <dbReference type="ChEBI" id="CHEBI:30864"/>
        <dbReference type="ChEBI" id="CHEBI:57540"/>
        <dbReference type="ChEBI" id="CHEBI:57945"/>
        <dbReference type="EC" id="1.3.1.14"/>
    </reaction>
</comment>
<comment type="cofactor">
    <cofactor evidence="1">
        <name>FMN</name>
        <dbReference type="ChEBI" id="CHEBI:58210"/>
    </cofactor>
    <text evidence="1">Binds 1 FMN per subunit.</text>
</comment>
<comment type="pathway">
    <text>Pyrimidine metabolism; UMP biosynthesis via de novo pathway; orotate from (S)-dihydroorotate (NAD(+) route): step 1/1.</text>
</comment>
<comment type="subunit">
    <text evidence="1">Heterotetramer of 2 PyrK and 2 PyrD type B subunits.</text>
</comment>
<comment type="subcellular location">
    <subcellularLocation>
        <location evidence="1">Cytoplasm</location>
    </subcellularLocation>
</comment>
<comment type="similarity">
    <text evidence="2">Belongs to the dihydroorotate dehydrogenase family. Type 1 subfamily.</text>
</comment>
<accession>F2MMN9</accession>
<accession>Q47741</accession>
<proteinExistence type="inferred from homology"/>
<sequence>MMKNPLAVSIPGLTLKNPIIPASGCFGFGEEYANYYDLDQLGSIMIKATTPQARYGNPTPRVAETPSGMLNAIGLQNPGLDVVMQEKLPKLEKYPNLPIIANVAGACEEDYVAVCAKIGQAPNVKAIELNISCPNVKHGGIAFGTDPEVAFQLTQAVKKVASVPIYVKLSPNVTDIVPIAQAIEAGGADGFSMINTLLGMRIDLKTRKPILANQTGGLSGPAIKPVAIRLIRQVASVSQLPIIGMGGVQTVDDVLEMFMAGASAVGVGTANFTDPYICPKLIDGLPKRMEELGIESLEQLIKEVREGQQNAR</sequence>
<evidence type="ECO:0000250" key="1"/>
<evidence type="ECO:0000305" key="2"/>
<dbReference type="EC" id="1.3.1.14"/>
<dbReference type="EMBL" id="U24692">
    <property type="protein sequence ID" value="AAA67066.1"/>
    <property type="molecule type" value="Genomic_DNA"/>
</dbReference>
<dbReference type="EMBL" id="CP002621">
    <property type="protein sequence ID" value="AEA94112.1"/>
    <property type="molecule type" value="Genomic_DNA"/>
</dbReference>
<dbReference type="RefSeq" id="WP_002379493.1">
    <property type="nucleotide sequence ID" value="NZ_JAWXYD010000001.1"/>
</dbReference>
<dbReference type="SMR" id="F2MMN9"/>
<dbReference type="KEGG" id="efi:OG1RF_11425"/>
<dbReference type="HOGENOM" id="CLU_042042_0_0_9"/>
<dbReference type="UniPathway" id="UPA00070">
    <property type="reaction ID" value="UER00945"/>
</dbReference>
<dbReference type="GO" id="GO:0005737">
    <property type="term" value="C:cytoplasm"/>
    <property type="evidence" value="ECO:0007669"/>
    <property type="project" value="UniProtKB-SubCell"/>
</dbReference>
<dbReference type="GO" id="GO:0004589">
    <property type="term" value="F:dihydroorotate dehydrogenase (NAD+) activity"/>
    <property type="evidence" value="ECO:0007669"/>
    <property type="project" value="UniProtKB-EC"/>
</dbReference>
<dbReference type="GO" id="GO:0006207">
    <property type="term" value="P:'de novo' pyrimidine nucleobase biosynthetic process"/>
    <property type="evidence" value="ECO:0007669"/>
    <property type="project" value="InterPro"/>
</dbReference>
<dbReference type="GO" id="GO:0044205">
    <property type="term" value="P:'de novo' UMP biosynthetic process"/>
    <property type="evidence" value="ECO:0007669"/>
    <property type="project" value="UniProtKB-UniRule"/>
</dbReference>
<dbReference type="CDD" id="cd04740">
    <property type="entry name" value="DHOD_1B_like"/>
    <property type="match status" value="1"/>
</dbReference>
<dbReference type="FunFam" id="3.20.20.70:FF:000069">
    <property type="entry name" value="Dihydroorotate dehydrogenase"/>
    <property type="match status" value="1"/>
</dbReference>
<dbReference type="Gene3D" id="3.20.20.70">
    <property type="entry name" value="Aldolase class I"/>
    <property type="match status" value="1"/>
</dbReference>
<dbReference type="HAMAP" id="MF_00224">
    <property type="entry name" value="DHO_dh_type1"/>
    <property type="match status" value="1"/>
</dbReference>
<dbReference type="InterPro" id="IPR013785">
    <property type="entry name" value="Aldolase_TIM"/>
</dbReference>
<dbReference type="InterPro" id="IPR050074">
    <property type="entry name" value="DHO_dehydrogenase"/>
</dbReference>
<dbReference type="InterPro" id="IPR033888">
    <property type="entry name" value="DHOD_1B"/>
</dbReference>
<dbReference type="InterPro" id="IPR024920">
    <property type="entry name" value="Dihydroorotate_DH_1"/>
</dbReference>
<dbReference type="InterPro" id="IPR012135">
    <property type="entry name" value="Dihydroorotate_DH_1_2"/>
</dbReference>
<dbReference type="InterPro" id="IPR005720">
    <property type="entry name" value="Dihydroorotate_DH_cat"/>
</dbReference>
<dbReference type="InterPro" id="IPR001295">
    <property type="entry name" value="Dihydroorotate_DH_CS"/>
</dbReference>
<dbReference type="InterPro" id="IPR049622">
    <property type="entry name" value="Dihydroorotate_DH_I"/>
</dbReference>
<dbReference type="NCBIfam" id="NF005574">
    <property type="entry name" value="PRK07259.1"/>
    <property type="match status" value="1"/>
</dbReference>
<dbReference type="NCBIfam" id="TIGR01037">
    <property type="entry name" value="pyrD_sub1_fam"/>
    <property type="match status" value="1"/>
</dbReference>
<dbReference type="PANTHER" id="PTHR48109:SF1">
    <property type="entry name" value="DIHYDROOROTATE DEHYDROGENASE (FUMARATE)"/>
    <property type="match status" value="1"/>
</dbReference>
<dbReference type="PANTHER" id="PTHR48109">
    <property type="entry name" value="DIHYDROOROTATE DEHYDROGENASE (QUINONE), MITOCHONDRIAL-RELATED"/>
    <property type="match status" value="1"/>
</dbReference>
<dbReference type="Pfam" id="PF01180">
    <property type="entry name" value="DHO_dh"/>
    <property type="match status" value="1"/>
</dbReference>
<dbReference type="PIRSF" id="PIRSF000164">
    <property type="entry name" value="DHO_oxidase"/>
    <property type="match status" value="1"/>
</dbReference>
<dbReference type="SUPFAM" id="SSF51395">
    <property type="entry name" value="FMN-linked oxidoreductases"/>
    <property type="match status" value="1"/>
</dbReference>
<dbReference type="PROSITE" id="PS00911">
    <property type="entry name" value="DHODEHASE_1"/>
    <property type="match status" value="1"/>
</dbReference>
<dbReference type="PROSITE" id="PS00912">
    <property type="entry name" value="DHODEHASE_2"/>
    <property type="match status" value="1"/>
</dbReference>
<feature type="chain" id="PRO_0000412178" description="Dihydroorotate dehydrogenase B (NAD(+)), catalytic subunit">
    <location>
        <begin position="1"/>
        <end position="312"/>
    </location>
</feature>
<feature type="active site" description="Nucleophile">
    <location>
        <position position="133"/>
    </location>
</feature>
<feature type="binding site" evidence="1">
    <location>
        <position position="23"/>
    </location>
    <ligand>
        <name>FMN</name>
        <dbReference type="ChEBI" id="CHEBI:58210"/>
    </ligand>
</feature>
<feature type="binding site" evidence="1">
    <location>
        <begin position="47"/>
        <end position="48"/>
    </location>
    <ligand>
        <name>FMN</name>
        <dbReference type="ChEBI" id="CHEBI:58210"/>
    </ligand>
</feature>
<feature type="binding site" evidence="1">
    <location>
        <position position="47"/>
    </location>
    <ligand>
        <name>substrate</name>
    </ligand>
</feature>
<feature type="binding site" evidence="1">
    <location>
        <begin position="71"/>
        <end position="75"/>
    </location>
    <ligand>
        <name>substrate</name>
    </ligand>
</feature>
<feature type="binding site" evidence="1">
    <location>
        <position position="102"/>
    </location>
    <ligand>
        <name>FMN</name>
        <dbReference type="ChEBI" id="CHEBI:58210"/>
    </ligand>
</feature>
<feature type="binding site" evidence="1">
    <location>
        <position position="130"/>
    </location>
    <ligand>
        <name>FMN</name>
        <dbReference type="ChEBI" id="CHEBI:58210"/>
    </ligand>
</feature>
<feature type="binding site" evidence="1">
    <location>
        <position position="130"/>
    </location>
    <ligand>
        <name>substrate</name>
    </ligand>
</feature>
<feature type="binding site" evidence="1">
    <location>
        <position position="168"/>
    </location>
    <ligand>
        <name>FMN</name>
        <dbReference type="ChEBI" id="CHEBI:58210"/>
    </ligand>
</feature>
<feature type="binding site" evidence="1">
    <location>
        <position position="194"/>
    </location>
    <ligand>
        <name>FMN</name>
        <dbReference type="ChEBI" id="CHEBI:58210"/>
    </ligand>
</feature>
<feature type="binding site" evidence="1">
    <location>
        <begin position="195"/>
        <end position="196"/>
    </location>
    <ligand>
        <name>substrate</name>
    </ligand>
</feature>
<feature type="binding site" evidence="1">
    <location>
        <position position="220"/>
    </location>
    <ligand>
        <name>FMN</name>
        <dbReference type="ChEBI" id="CHEBI:58210"/>
    </ligand>
</feature>
<feature type="binding site" evidence="1">
    <location>
        <begin position="246"/>
        <end position="247"/>
    </location>
    <ligand>
        <name>FMN</name>
        <dbReference type="ChEBI" id="CHEBI:58210"/>
    </ligand>
</feature>
<feature type="binding site" evidence="1">
    <location>
        <begin position="268"/>
        <end position="269"/>
    </location>
    <ligand>
        <name>FMN</name>
        <dbReference type="ChEBI" id="CHEBI:58210"/>
    </ligand>
</feature>
<reference key="1">
    <citation type="journal article" date="1995" name="J. Bacteriol.">
        <title>Generation of auxotrophic mutants of Enterococcus faecalis.</title>
        <authorList>
            <person name="Li X."/>
            <person name="Weinstock G.M."/>
            <person name="Murray B.E."/>
        </authorList>
    </citation>
    <scope>NUCLEOTIDE SEQUENCE [GENOMIC DNA]</scope>
    <source>
        <strain>ATCC 47077 / OG1RF</strain>
    </source>
</reference>
<reference key="2">
    <citation type="journal article" date="2008" name="Genome Biol.">
        <title>Large scale variation in Enterococcus faecalis illustrated by the genome analysis of strain OG1RF.</title>
        <authorList>
            <person name="Bourgogne A."/>
            <person name="Garsin D.A."/>
            <person name="Qin X."/>
            <person name="Singh K.V."/>
            <person name="Sillanpaa J."/>
            <person name="Yerrapragada S."/>
            <person name="Ding Y."/>
            <person name="Dugan-Rocha S."/>
            <person name="Buhay C."/>
            <person name="Shen H."/>
            <person name="Chen G."/>
            <person name="Williams G."/>
            <person name="Muzny D."/>
            <person name="Maadani A."/>
            <person name="Fox K.A."/>
            <person name="Gioia J."/>
            <person name="Chen L."/>
            <person name="Shang Y."/>
            <person name="Arias C.A."/>
            <person name="Nallapareddy S.R."/>
            <person name="Zhao M."/>
            <person name="Prakash V.P."/>
            <person name="Chowdhury S."/>
            <person name="Jiang H."/>
            <person name="Gibbs R.A."/>
            <person name="Murray B.E."/>
            <person name="Highlander S.K."/>
            <person name="Weinstock G.M."/>
        </authorList>
    </citation>
    <scope>NUCLEOTIDE SEQUENCE [LARGE SCALE GENOMIC DNA]</scope>
    <source>
        <strain>ATCC 47077 / OG1RF</strain>
    </source>
</reference>
<organism>
    <name type="scientific">Enterococcus faecalis (strain ATCC 47077 / OG1RF)</name>
    <dbReference type="NCBI Taxonomy" id="474186"/>
    <lineage>
        <taxon>Bacteria</taxon>
        <taxon>Bacillati</taxon>
        <taxon>Bacillota</taxon>
        <taxon>Bacilli</taxon>
        <taxon>Lactobacillales</taxon>
        <taxon>Enterococcaceae</taxon>
        <taxon>Enterococcus</taxon>
    </lineage>
</organism>
<gene>
    <name type="primary">pyrDB</name>
    <name type="synonym">pyrD</name>
    <name type="synonym">pyrD-2</name>
    <name type="ordered locus">OG1RF_11425</name>
</gene>
<keyword id="KW-0963">Cytoplasm</keyword>
<keyword id="KW-0285">Flavoprotein</keyword>
<keyword id="KW-0288">FMN</keyword>
<keyword id="KW-0520">NAD</keyword>
<keyword id="KW-0560">Oxidoreductase</keyword>
<keyword id="KW-0665">Pyrimidine biosynthesis</keyword>
<protein>
    <recommendedName>
        <fullName>Dihydroorotate dehydrogenase B (NAD(+)), catalytic subunit</fullName>
        <shortName>DHOD B</shortName>
        <shortName>DHODase B</shortName>
        <shortName>DHOdehase B</shortName>
        <ecNumber>1.3.1.14</ecNumber>
    </recommendedName>
    <alternativeName>
        <fullName>Dihydroorotate oxidase B</fullName>
    </alternativeName>
    <alternativeName>
        <fullName>Orotate reductase (NADH)</fullName>
    </alternativeName>
</protein>
<name>PYRDB_ENTFO</name>